<feature type="chain" id="PRO_1000084899" description="DNA polymerase IV">
    <location>
        <begin position="1"/>
        <end position="356"/>
    </location>
</feature>
<feature type="domain" description="UmuC" evidence="1">
    <location>
        <begin position="7"/>
        <end position="188"/>
    </location>
</feature>
<feature type="active site" evidence="1">
    <location>
        <position position="107"/>
    </location>
</feature>
<feature type="binding site" evidence="1">
    <location>
        <position position="11"/>
    </location>
    <ligand>
        <name>Mg(2+)</name>
        <dbReference type="ChEBI" id="CHEBI:18420"/>
    </ligand>
</feature>
<feature type="binding site" evidence="1">
    <location>
        <position position="106"/>
    </location>
    <ligand>
        <name>Mg(2+)</name>
        <dbReference type="ChEBI" id="CHEBI:18420"/>
    </ligand>
</feature>
<feature type="site" description="Substrate discrimination" evidence="1">
    <location>
        <position position="16"/>
    </location>
</feature>
<name>DPO4_LISW6</name>
<comment type="function">
    <text evidence="1">Poorly processive, error-prone DNA polymerase involved in untargeted mutagenesis. Copies undamaged DNA at stalled replication forks, which arise in vivo from mismatched or misaligned primer ends. These misaligned primers can be extended by PolIV. Exhibits no 3'-5' exonuclease (proofreading) activity. May be involved in translesional synthesis, in conjunction with the beta clamp from PolIII.</text>
</comment>
<comment type="catalytic activity">
    <reaction evidence="1">
        <text>DNA(n) + a 2'-deoxyribonucleoside 5'-triphosphate = DNA(n+1) + diphosphate</text>
        <dbReference type="Rhea" id="RHEA:22508"/>
        <dbReference type="Rhea" id="RHEA-COMP:17339"/>
        <dbReference type="Rhea" id="RHEA-COMP:17340"/>
        <dbReference type="ChEBI" id="CHEBI:33019"/>
        <dbReference type="ChEBI" id="CHEBI:61560"/>
        <dbReference type="ChEBI" id="CHEBI:173112"/>
        <dbReference type="EC" id="2.7.7.7"/>
    </reaction>
</comment>
<comment type="cofactor">
    <cofactor evidence="1">
        <name>Mg(2+)</name>
        <dbReference type="ChEBI" id="CHEBI:18420"/>
    </cofactor>
    <text evidence="1">Binds 2 magnesium ions per subunit.</text>
</comment>
<comment type="subunit">
    <text evidence="1">Monomer.</text>
</comment>
<comment type="subcellular location">
    <subcellularLocation>
        <location evidence="1">Cytoplasm</location>
    </subcellularLocation>
</comment>
<comment type="similarity">
    <text evidence="1">Belongs to the DNA polymerase type-Y family.</text>
</comment>
<reference key="1">
    <citation type="journal article" date="2006" name="J. Bacteriol.">
        <title>Whole-genome sequence of Listeria welshimeri reveals common steps in genome reduction with Listeria innocua as compared to Listeria monocytogenes.</title>
        <authorList>
            <person name="Hain T."/>
            <person name="Steinweg C."/>
            <person name="Kuenne C.T."/>
            <person name="Billion A."/>
            <person name="Ghai R."/>
            <person name="Chatterjee S.S."/>
            <person name="Domann E."/>
            <person name="Kaerst U."/>
            <person name="Goesmann A."/>
            <person name="Bekel T."/>
            <person name="Bartels D."/>
            <person name="Kaiser O."/>
            <person name="Meyer F."/>
            <person name="Puehler A."/>
            <person name="Weisshaar B."/>
            <person name="Wehland J."/>
            <person name="Liang C."/>
            <person name="Dandekar T."/>
            <person name="Lampidis R."/>
            <person name="Kreft J."/>
            <person name="Goebel W."/>
            <person name="Chakraborty T."/>
        </authorList>
    </citation>
    <scope>NUCLEOTIDE SEQUENCE [LARGE SCALE GENOMIC DNA]</scope>
    <source>
        <strain>ATCC 35897 / DSM 20650 / CCUG 15529 / CIP 8149 / NCTC 11857 / SLCC 5334 / V8</strain>
    </source>
</reference>
<proteinExistence type="inferred from homology"/>
<gene>
    <name evidence="1" type="primary">dinB</name>
    <name type="ordered locus">lwe1994</name>
</gene>
<protein>
    <recommendedName>
        <fullName evidence="1">DNA polymerase IV</fullName>
        <shortName evidence="1">Pol IV</shortName>
        <ecNumber evidence="1">2.7.7.7</ecNumber>
    </recommendedName>
</protein>
<keyword id="KW-0963">Cytoplasm</keyword>
<keyword id="KW-0227">DNA damage</keyword>
<keyword id="KW-0234">DNA repair</keyword>
<keyword id="KW-0235">DNA replication</keyword>
<keyword id="KW-0238">DNA-binding</keyword>
<keyword id="KW-0239">DNA-directed DNA polymerase</keyword>
<keyword id="KW-0460">Magnesium</keyword>
<keyword id="KW-0479">Metal-binding</keyword>
<keyword id="KW-0515">Mutator protein</keyword>
<keyword id="KW-0548">Nucleotidyltransferase</keyword>
<keyword id="KW-0808">Transferase</keyword>
<accession>A0AK80</accession>
<sequence length="356" mass="40489">MDTSRKIIHIDMDAFYASVEQRDHPEFRGKPLIIGGDPNKRGVVATCSYEARKFGVHSAMPTRQAAKLCPNGIFIHGNMAHYVEVSNQIREIFSRYTDIIEPLSLDEAYLDVTENKKGMKSATMVARDIQQTIYHELGLTASAGVSFNKFIAKIASDFKKPAGMTVVAPEEAEAFLEQIPVTKFYGVGKVTAEKLHRLGIETGADLKKWSEWDLIRELHKHGYHLYRHVRGRSNNIVNPHRDRKSVGKETTFEFNVLDSRILEQSLMQFAKKVEARLIKLQKHGKTVVLKLRYSDFTTITKRLTLNEYTNDANQIYQAAALLLRESYTGQDSIRLIGLTVTNLKPVYFENLRLEGL</sequence>
<organism>
    <name type="scientific">Listeria welshimeri serovar 6b (strain ATCC 35897 / DSM 20650 / CCUG 15529 / CIP 8149 / NCTC 11857 / SLCC 5334 / V8)</name>
    <dbReference type="NCBI Taxonomy" id="386043"/>
    <lineage>
        <taxon>Bacteria</taxon>
        <taxon>Bacillati</taxon>
        <taxon>Bacillota</taxon>
        <taxon>Bacilli</taxon>
        <taxon>Bacillales</taxon>
        <taxon>Listeriaceae</taxon>
        <taxon>Listeria</taxon>
    </lineage>
</organism>
<dbReference type="EC" id="2.7.7.7" evidence="1"/>
<dbReference type="EMBL" id="AM263198">
    <property type="protein sequence ID" value="CAK21412.1"/>
    <property type="molecule type" value="Genomic_DNA"/>
</dbReference>
<dbReference type="RefSeq" id="WP_011702759.1">
    <property type="nucleotide sequence ID" value="NC_008555.1"/>
</dbReference>
<dbReference type="SMR" id="A0AK80"/>
<dbReference type="STRING" id="386043.lwe1994"/>
<dbReference type="GeneID" id="61189894"/>
<dbReference type="KEGG" id="lwe:lwe1994"/>
<dbReference type="eggNOG" id="COG0389">
    <property type="taxonomic scope" value="Bacteria"/>
</dbReference>
<dbReference type="HOGENOM" id="CLU_012348_1_2_9"/>
<dbReference type="OrthoDB" id="9808813at2"/>
<dbReference type="Proteomes" id="UP000000779">
    <property type="component" value="Chromosome"/>
</dbReference>
<dbReference type="GO" id="GO:0005829">
    <property type="term" value="C:cytosol"/>
    <property type="evidence" value="ECO:0007669"/>
    <property type="project" value="TreeGrafter"/>
</dbReference>
<dbReference type="GO" id="GO:0003684">
    <property type="term" value="F:damaged DNA binding"/>
    <property type="evidence" value="ECO:0007669"/>
    <property type="project" value="InterPro"/>
</dbReference>
<dbReference type="GO" id="GO:0003887">
    <property type="term" value="F:DNA-directed DNA polymerase activity"/>
    <property type="evidence" value="ECO:0007669"/>
    <property type="project" value="UniProtKB-UniRule"/>
</dbReference>
<dbReference type="GO" id="GO:0000287">
    <property type="term" value="F:magnesium ion binding"/>
    <property type="evidence" value="ECO:0007669"/>
    <property type="project" value="UniProtKB-UniRule"/>
</dbReference>
<dbReference type="GO" id="GO:0006261">
    <property type="term" value="P:DNA-templated DNA replication"/>
    <property type="evidence" value="ECO:0007669"/>
    <property type="project" value="UniProtKB-UniRule"/>
</dbReference>
<dbReference type="GO" id="GO:0042276">
    <property type="term" value="P:error-prone translesion synthesis"/>
    <property type="evidence" value="ECO:0007669"/>
    <property type="project" value="TreeGrafter"/>
</dbReference>
<dbReference type="GO" id="GO:0009432">
    <property type="term" value="P:SOS response"/>
    <property type="evidence" value="ECO:0007669"/>
    <property type="project" value="TreeGrafter"/>
</dbReference>
<dbReference type="CDD" id="cd03586">
    <property type="entry name" value="PolY_Pol_IV_kappa"/>
    <property type="match status" value="1"/>
</dbReference>
<dbReference type="FunFam" id="1.10.150.20:FF:000062">
    <property type="entry name" value="DNA polymerase IV"/>
    <property type="match status" value="1"/>
</dbReference>
<dbReference type="FunFam" id="3.30.1490.100:FF:000004">
    <property type="entry name" value="DNA polymerase IV"/>
    <property type="match status" value="1"/>
</dbReference>
<dbReference type="FunFam" id="3.30.70.270:FF:000002">
    <property type="entry name" value="DNA polymerase IV"/>
    <property type="match status" value="1"/>
</dbReference>
<dbReference type="FunFam" id="3.40.1170.60:FF:000001">
    <property type="entry name" value="DNA polymerase IV"/>
    <property type="match status" value="1"/>
</dbReference>
<dbReference type="Gene3D" id="3.30.70.270">
    <property type="match status" value="1"/>
</dbReference>
<dbReference type="Gene3D" id="3.40.1170.60">
    <property type="match status" value="1"/>
</dbReference>
<dbReference type="Gene3D" id="1.10.150.20">
    <property type="entry name" value="5' to 3' exonuclease, C-terminal subdomain"/>
    <property type="match status" value="1"/>
</dbReference>
<dbReference type="Gene3D" id="3.30.1490.100">
    <property type="entry name" value="DNA polymerase, Y-family, little finger domain"/>
    <property type="match status" value="1"/>
</dbReference>
<dbReference type="HAMAP" id="MF_01113">
    <property type="entry name" value="DNApol_IV"/>
    <property type="match status" value="1"/>
</dbReference>
<dbReference type="InterPro" id="IPR043502">
    <property type="entry name" value="DNA/RNA_pol_sf"/>
</dbReference>
<dbReference type="InterPro" id="IPR036775">
    <property type="entry name" value="DNA_pol_Y-fam_lit_finger_sf"/>
</dbReference>
<dbReference type="InterPro" id="IPR017961">
    <property type="entry name" value="DNA_pol_Y-fam_little_finger"/>
</dbReference>
<dbReference type="InterPro" id="IPR050116">
    <property type="entry name" value="DNA_polymerase-Y"/>
</dbReference>
<dbReference type="InterPro" id="IPR022880">
    <property type="entry name" value="DNApol_IV"/>
</dbReference>
<dbReference type="InterPro" id="IPR024728">
    <property type="entry name" value="PolY_HhH_motif"/>
</dbReference>
<dbReference type="InterPro" id="IPR043128">
    <property type="entry name" value="Rev_trsase/Diguanyl_cyclase"/>
</dbReference>
<dbReference type="InterPro" id="IPR001126">
    <property type="entry name" value="UmuC"/>
</dbReference>
<dbReference type="NCBIfam" id="NF002677">
    <property type="entry name" value="PRK02406.1"/>
    <property type="match status" value="1"/>
</dbReference>
<dbReference type="NCBIfam" id="NF010731">
    <property type="entry name" value="PRK14133.1"/>
    <property type="match status" value="1"/>
</dbReference>
<dbReference type="PANTHER" id="PTHR11076:SF33">
    <property type="entry name" value="DNA POLYMERASE KAPPA"/>
    <property type="match status" value="1"/>
</dbReference>
<dbReference type="PANTHER" id="PTHR11076">
    <property type="entry name" value="DNA REPAIR POLYMERASE UMUC / TRANSFERASE FAMILY MEMBER"/>
    <property type="match status" value="1"/>
</dbReference>
<dbReference type="Pfam" id="PF00817">
    <property type="entry name" value="IMS"/>
    <property type="match status" value="1"/>
</dbReference>
<dbReference type="Pfam" id="PF11799">
    <property type="entry name" value="IMS_C"/>
    <property type="match status" value="1"/>
</dbReference>
<dbReference type="Pfam" id="PF11798">
    <property type="entry name" value="IMS_HHH"/>
    <property type="match status" value="1"/>
</dbReference>
<dbReference type="SUPFAM" id="SSF56672">
    <property type="entry name" value="DNA/RNA polymerases"/>
    <property type="match status" value="1"/>
</dbReference>
<dbReference type="SUPFAM" id="SSF100879">
    <property type="entry name" value="Lesion bypass DNA polymerase (Y-family), little finger domain"/>
    <property type="match status" value="1"/>
</dbReference>
<dbReference type="PROSITE" id="PS50173">
    <property type="entry name" value="UMUC"/>
    <property type="match status" value="1"/>
</dbReference>
<evidence type="ECO:0000255" key="1">
    <source>
        <dbReference type="HAMAP-Rule" id="MF_01113"/>
    </source>
</evidence>